<evidence type="ECO:0000250" key="1">
    <source>
        <dbReference type="UniProtKB" id="O54754"/>
    </source>
</evidence>
<evidence type="ECO:0000250" key="2">
    <source>
        <dbReference type="UniProtKB" id="Q06278"/>
    </source>
</evidence>
<evidence type="ECO:0000255" key="3">
    <source>
        <dbReference type="PROSITE-ProRule" id="PRU00465"/>
    </source>
</evidence>
<evidence type="ECO:0000255" key="4">
    <source>
        <dbReference type="PROSITE-ProRule" id="PRU00718"/>
    </source>
</evidence>
<evidence type="ECO:0000269" key="5">
    <source>
    </source>
</evidence>
<evidence type="ECO:0000269" key="6">
    <source>
    </source>
</evidence>
<evidence type="ECO:0000305" key="7"/>
<evidence type="ECO:0000305" key="8">
    <source>
    </source>
</evidence>
<feature type="chain" id="PRO_0000425242" description="Aldehyde oxidase 1">
    <location>
        <begin position="1"/>
        <end position="1332"/>
    </location>
</feature>
<feature type="domain" description="2Fe-2S ferredoxin-type" evidence="3">
    <location>
        <begin position="4"/>
        <end position="91"/>
    </location>
</feature>
<feature type="domain" description="FAD-binding PCMH-type" evidence="4">
    <location>
        <begin position="234"/>
        <end position="419"/>
    </location>
</feature>
<feature type="active site" description="Proton acceptor; for azaheterocycle hydroxylase activity" evidence="1">
    <location>
        <position position="1264"/>
    </location>
</feature>
<feature type="binding site" evidence="2">
    <location>
        <position position="43"/>
    </location>
    <ligand>
        <name>[2Fe-2S] cluster</name>
        <dbReference type="ChEBI" id="CHEBI:190135"/>
        <label>1</label>
    </ligand>
</feature>
<feature type="binding site" evidence="2">
    <location>
        <position position="48"/>
    </location>
    <ligand>
        <name>[2Fe-2S] cluster</name>
        <dbReference type="ChEBI" id="CHEBI:190135"/>
        <label>1</label>
    </ligand>
</feature>
<feature type="binding site" evidence="2">
    <location>
        <position position="51"/>
    </location>
    <ligand>
        <name>[2Fe-2S] cluster</name>
        <dbReference type="ChEBI" id="CHEBI:190135"/>
        <label>1</label>
    </ligand>
</feature>
<feature type="binding site" evidence="2">
    <location>
        <position position="73"/>
    </location>
    <ligand>
        <name>[2Fe-2S] cluster</name>
        <dbReference type="ChEBI" id="CHEBI:190135"/>
        <label>1</label>
    </ligand>
</feature>
<feature type="binding site" evidence="2">
    <location>
        <position position="112"/>
    </location>
    <ligand>
        <name>Mo-molybdopterin</name>
        <dbReference type="ChEBI" id="CHEBI:71302"/>
    </ligand>
</feature>
<feature type="binding site" evidence="2">
    <location>
        <position position="113"/>
    </location>
    <ligand>
        <name>[2Fe-2S] cluster</name>
        <dbReference type="ChEBI" id="CHEBI:190135"/>
        <label>2</label>
    </ligand>
</feature>
<feature type="binding site" evidence="2">
    <location>
        <position position="116"/>
    </location>
    <ligand>
        <name>[2Fe-2S] cluster</name>
        <dbReference type="ChEBI" id="CHEBI:190135"/>
        <label>2</label>
    </ligand>
</feature>
<feature type="binding site" evidence="2">
    <location>
        <position position="148"/>
    </location>
    <ligand>
        <name>[2Fe-2S] cluster</name>
        <dbReference type="ChEBI" id="CHEBI:190135"/>
        <label>2</label>
    </ligand>
</feature>
<feature type="binding site" evidence="2">
    <location>
        <position position="150"/>
    </location>
    <ligand>
        <name>[2Fe-2S] cluster</name>
        <dbReference type="ChEBI" id="CHEBI:190135"/>
        <label>2</label>
    </ligand>
</feature>
<feature type="binding site" evidence="2">
    <location>
        <position position="150"/>
    </location>
    <ligand>
        <name>Mo-molybdopterin</name>
        <dbReference type="ChEBI" id="CHEBI:71302"/>
    </ligand>
</feature>
<feature type="binding site" evidence="2">
    <location>
        <begin position="262"/>
        <end position="269"/>
    </location>
    <ligand>
        <name>FAD</name>
        <dbReference type="ChEBI" id="CHEBI:57692"/>
    </ligand>
</feature>
<feature type="binding site" evidence="2">
    <location>
        <position position="343"/>
    </location>
    <ligand>
        <name>FAD</name>
        <dbReference type="ChEBI" id="CHEBI:57692"/>
    </ligand>
</feature>
<feature type="binding site" evidence="2">
    <location>
        <position position="352"/>
    </location>
    <ligand>
        <name>FAD</name>
        <dbReference type="ChEBI" id="CHEBI:57692"/>
    </ligand>
</feature>
<feature type="binding site" evidence="2">
    <location>
        <position position="356"/>
    </location>
    <ligand>
        <name>FAD</name>
        <dbReference type="ChEBI" id="CHEBI:57692"/>
    </ligand>
</feature>
<feature type="binding site" evidence="2">
    <location>
        <position position="365"/>
    </location>
    <ligand>
        <name>FAD</name>
        <dbReference type="ChEBI" id="CHEBI:57692"/>
    </ligand>
</feature>
<feature type="binding site" evidence="2">
    <location>
        <position position="409"/>
    </location>
    <ligand>
        <name>FAD</name>
        <dbReference type="ChEBI" id="CHEBI:57692"/>
    </ligand>
</feature>
<feature type="binding site" evidence="2">
    <location>
        <begin position="800"/>
        <end position="801"/>
    </location>
    <ligand>
        <name>Mo-molybdopterin</name>
        <dbReference type="ChEBI" id="CHEBI:71302"/>
    </ligand>
</feature>
<feature type="binding site" evidence="2">
    <location>
        <position position="1041"/>
    </location>
    <ligand>
        <name>Mo-molybdopterin</name>
        <dbReference type="ChEBI" id="CHEBI:71302"/>
    </ligand>
</feature>
<feature type="binding site" evidence="2">
    <location>
        <begin position="1082"/>
        <end position="1085"/>
    </location>
    <ligand>
        <name>Mo-molybdopterin</name>
        <dbReference type="ChEBI" id="CHEBI:71302"/>
    </ligand>
</feature>
<feature type="binding site" evidence="2">
    <location>
        <position position="1197"/>
    </location>
    <ligand>
        <name>Mo-molybdopterin</name>
        <dbReference type="ChEBI" id="CHEBI:71302"/>
    </ligand>
</feature>
<feature type="binding site" evidence="2">
    <location>
        <position position="1262"/>
    </location>
    <ligand>
        <name>Mo-molybdopterin</name>
        <dbReference type="ChEBI" id="CHEBI:71302"/>
    </ligand>
</feature>
<feature type="sequence conflict" description="In Ref. 1; AFG18181." evidence="7" ref="1">
    <original>S</original>
    <variation>N</variation>
    <location>
        <position position="519"/>
    </location>
</feature>
<feature type="sequence conflict" description="In Ref. 1; AFG18181." evidence="7" ref="1">
    <original>E</original>
    <variation>G</variation>
    <location>
        <position position="677"/>
    </location>
</feature>
<feature type="sequence conflict" description="In Ref. 1; AFG18181." evidence="7" ref="1">
    <original>E</original>
    <variation>G</variation>
    <location>
        <position position="695"/>
    </location>
</feature>
<feature type="sequence conflict" description="In Ref. 1; AFG18181." evidence="7" ref="1">
    <original>R</original>
    <variation>T</variation>
    <location>
        <position position="1137"/>
    </location>
</feature>
<feature type="sequence conflict" description="In Ref. 1; AFG18181." evidence="7" ref="1">
    <original>A</original>
    <variation>P</variation>
    <location>
        <position position="1201"/>
    </location>
</feature>
<reference key="1">
    <citation type="journal article" date="2013" name="Cell. Mol. Life Sci.">
        <title>Structure and evolution of vertebrate aldehyde oxidases: from gene duplication to gene suppression.</title>
        <authorList>
            <person name="Kurosaki M."/>
            <person name="Bolis M."/>
            <person name="Fratelli M."/>
            <person name="Barzago M.M."/>
            <person name="Pattini L."/>
            <person name="Perretta G."/>
            <person name="Terao M."/>
            <person name="Garattini E."/>
        </authorList>
    </citation>
    <scope>NUCLEOTIDE SEQUENCE [MRNA]</scope>
    <scope>IDENTIFICATION OF PARALOGS</scope>
</reference>
<reference key="2">
    <citation type="journal article" date="2011" name="Nature">
        <title>A high-resolution map of human evolutionary constraint using 29 mammals.</title>
        <authorList>
            <person name="Lindblad-Toh K."/>
            <person name="Garber M."/>
            <person name="Zuk O."/>
            <person name="Lin M.F."/>
            <person name="Parker B.J."/>
            <person name="Washietl S."/>
            <person name="Kheradpour P."/>
            <person name="Ernst J."/>
            <person name="Jordan G."/>
            <person name="Mauceli E."/>
            <person name="Ward L.D."/>
            <person name="Lowe C.B."/>
            <person name="Holloway A.K."/>
            <person name="Clamp M."/>
            <person name="Gnerre S."/>
            <person name="Alfoldi J."/>
            <person name="Beal K."/>
            <person name="Chang J."/>
            <person name="Clawson H."/>
            <person name="Cuff J."/>
            <person name="Di Palma F."/>
            <person name="Fitzgerald S."/>
            <person name="Flicek P."/>
            <person name="Guttman M."/>
            <person name="Hubisz M.J."/>
            <person name="Jaffe D.B."/>
            <person name="Jungreis I."/>
            <person name="Kent W.J."/>
            <person name="Kostka D."/>
            <person name="Lara M."/>
            <person name="Martins A.L."/>
            <person name="Massingham T."/>
            <person name="Moltke I."/>
            <person name="Raney B.J."/>
            <person name="Rasmussen M.D."/>
            <person name="Robinson J."/>
            <person name="Stark A."/>
            <person name="Vilella A.J."/>
            <person name="Wen J."/>
            <person name="Xie X."/>
            <person name="Zody M.C."/>
            <person name="Baldwin J."/>
            <person name="Bloom T."/>
            <person name="Chin C.W."/>
            <person name="Heiman D."/>
            <person name="Nicol R."/>
            <person name="Nusbaum C."/>
            <person name="Young S."/>
            <person name="Wilkinson J."/>
            <person name="Worley K.C."/>
            <person name="Kovar C.L."/>
            <person name="Muzny D.M."/>
            <person name="Gibbs R.A."/>
            <person name="Cree A."/>
            <person name="Dihn H.H."/>
            <person name="Fowler G."/>
            <person name="Jhangiani S."/>
            <person name="Joshi V."/>
            <person name="Lee S."/>
            <person name="Lewis L.R."/>
            <person name="Nazareth L.V."/>
            <person name="Okwuonu G."/>
            <person name="Santibanez J."/>
            <person name="Warren W.C."/>
            <person name="Mardis E.R."/>
            <person name="Weinstock G.M."/>
            <person name="Wilson R.K."/>
            <person name="Delehaunty K."/>
            <person name="Dooling D."/>
            <person name="Fronik C."/>
            <person name="Fulton L."/>
            <person name="Fulton B."/>
            <person name="Graves T."/>
            <person name="Minx P."/>
            <person name="Sodergren E."/>
            <person name="Birney E."/>
            <person name="Margulies E.H."/>
            <person name="Herrero J."/>
            <person name="Green E.D."/>
            <person name="Haussler D."/>
            <person name="Siepel A."/>
            <person name="Goldman N."/>
            <person name="Pollard K.S."/>
            <person name="Pedersen J.S."/>
            <person name="Lander E.S."/>
            <person name="Kellis M."/>
        </authorList>
    </citation>
    <scope>NUCLEOTIDE SEQUENCE [LARGE SCALE GENOMIC DNA]</scope>
    <source>
        <strain>2N</strain>
    </source>
</reference>
<reference key="3">
    <citation type="journal article" date="1995" name="Arch. Biochem. Biophys.">
        <title>Substrate specificity of human liver aldehyde oxidase toward substituted quinazolines and phthalazines: a comparison with hepatic enzyme from guinea pig, rabbit, and baboon.</title>
        <authorList>
            <person name="Beedham C."/>
            <person name="Critchley D.J."/>
            <person name="Rance D.J."/>
        </authorList>
    </citation>
    <scope>FUNCTION AS AZAHETEROCYCLE OXIDASE</scope>
    <scope>SUBSTRATE SPECIFICITY</scope>
</reference>
<reference key="4">
    <citation type="journal article" date="1997" name="Drug Metab. Dispos.">
        <title>In vitro oxidation of famciclovir and 6-deoxypenciclovir by aldehyde oxidase from human, guinea pig, rabbit, and rat liver.</title>
        <authorList>
            <person name="Rashidi M.R."/>
            <person name="Smith J.A."/>
            <person name="Clarke S.E."/>
            <person name="Beedham C."/>
        </authorList>
    </citation>
    <scope>FUNCTION AS AZAHETEROCYCLE OXIDASE</scope>
    <scope>CATALYTIC ACTIVITY</scope>
    <scope>ACTIVITY REGULATION</scope>
    <scope>BIOPHYSICOCHEMICAL PROPERTIES</scope>
    <scope>SUBCELLULAR LOCATION</scope>
    <scope>TISSUE SPECIFICITY</scope>
</reference>
<proteinExistence type="evidence at protein level"/>
<dbReference type="EC" id="1.2.3.1" evidence="1"/>
<dbReference type="EC" id="1.17.3.-" evidence="5 6"/>
<dbReference type="EMBL" id="JQ280309">
    <property type="protein sequence ID" value="AFG18181.1"/>
    <property type="molecule type" value="mRNA"/>
</dbReference>
<dbReference type="EMBL" id="AAKN02051283">
    <property type="status" value="NOT_ANNOTATED_CDS"/>
    <property type="molecule type" value="Genomic_DNA"/>
</dbReference>
<dbReference type="RefSeq" id="NP_001295371.1">
    <property type="nucleotide sequence ID" value="NM_001308442.1"/>
</dbReference>
<dbReference type="SMR" id="H9TB17"/>
<dbReference type="FunCoup" id="H9TB17">
    <property type="interactions" value="574"/>
</dbReference>
<dbReference type="STRING" id="10141.ENSCPOP00000021102"/>
<dbReference type="BindingDB" id="H9TB17"/>
<dbReference type="ChEMBL" id="CHEMBL4523115"/>
<dbReference type="GeneID" id="100720210"/>
<dbReference type="KEGG" id="cpoc:100720210"/>
<dbReference type="CTD" id="316"/>
<dbReference type="eggNOG" id="KOG0430">
    <property type="taxonomic scope" value="Eukaryota"/>
</dbReference>
<dbReference type="InParanoid" id="H9TB17"/>
<dbReference type="OrthoDB" id="8300278at2759"/>
<dbReference type="TreeFam" id="TF353036"/>
<dbReference type="SABIO-RK" id="H9TB17"/>
<dbReference type="Proteomes" id="UP000005447">
    <property type="component" value="Unassembled WGS sequence"/>
</dbReference>
<dbReference type="GO" id="GO:0005829">
    <property type="term" value="C:cytosol"/>
    <property type="evidence" value="ECO:0000250"/>
    <property type="project" value="UniProtKB"/>
</dbReference>
<dbReference type="GO" id="GO:0051537">
    <property type="term" value="F:2 iron, 2 sulfur cluster binding"/>
    <property type="evidence" value="ECO:0000250"/>
    <property type="project" value="UniProtKB"/>
</dbReference>
<dbReference type="GO" id="GO:0004031">
    <property type="term" value="F:aldehyde oxidase activity"/>
    <property type="evidence" value="ECO:0000250"/>
    <property type="project" value="UniProtKB"/>
</dbReference>
<dbReference type="GO" id="GO:0071949">
    <property type="term" value="F:FAD binding"/>
    <property type="evidence" value="ECO:0007669"/>
    <property type="project" value="InterPro"/>
</dbReference>
<dbReference type="GO" id="GO:0050660">
    <property type="term" value="F:flavin adenine dinucleotide binding"/>
    <property type="evidence" value="ECO:0000250"/>
    <property type="project" value="UniProtKB"/>
</dbReference>
<dbReference type="GO" id="GO:0005506">
    <property type="term" value="F:iron ion binding"/>
    <property type="evidence" value="ECO:0000250"/>
    <property type="project" value="UniProtKB"/>
</dbReference>
<dbReference type="GO" id="GO:0043546">
    <property type="term" value="F:molybdopterin cofactor binding"/>
    <property type="evidence" value="ECO:0000250"/>
    <property type="project" value="UniProtKB"/>
</dbReference>
<dbReference type="GO" id="GO:0051287">
    <property type="term" value="F:NAD binding"/>
    <property type="evidence" value="ECO:0007669"/>
    <property type="project" value="InterPro"/>
</dbReference>
<dbReference type="GO" id="GO:0042803">
    <property type="term" value="F:protein homodimerization activity"/>
    <property type="evidence" value="ECO:0000250"/>
    <property type="project" value="UniProtKB"/>
</dbReference>
<dbReference type="GO" id="GO:0006629">
    <property type="term" value="P:lipid metabolic process"/>
    <property type="evidence" value="ECO:0007669"/>
    <property type="project" value="UniProtKB-KW"/>
</dbReference>
<dbReference type="GO" id="GO:0006805">
    <property type="term" value="P:xenobiotic metabolic process"/>
    <property type="evidence" value="ECO:0000250"/>
    <property type="project" value="UniProtKB"/>
</dbReference>
<dbReference type="FunFam" id="1.10.150.120:FF:000001">
    <property type="entry name" value="Aldehyde oxidase 1"/>
    <property type="match status" value="1"/>
</dbReference>
<dbReference type="FunFam" id="3.10.20.30:FF:000015">
    <property type="entry name" value="Aldehyde oxidase 1"/>
    <property type="match status" value="1"/>
</dbReference>
<dbReference type="FunFam" id="3.30.365.10:FF:000003">
    <property type="entry name" value="Aldehyde oxidase 1"/>
    <property type="match status" value="1"/>
</dbReference>
<dbReference type="FunFam" id="3.90.1170.50:FF:000001">
    <property type="entry name" value="Aldehyde oxidase 1"/>
    <property type="match status" value="1"/>
</dbReference>
<dbReference type="FunFam" id="3.30.365.10:FF:000004">
    <property type="entry name" value="Xanthine dehydrogenase oxidase"/>
    <property type="match status" value="1"/>
</dbReference>
<dbReference type="FunFam" id="3.30.390.50:FF:000001">
    <property type="entry name" value="Xanthine dehydrogenase oxidase"/>
    <property type="match status" value="1"/>
</dbReference>
<dbReference type="FunFam" id="3.30.43.10:FF:000001">
    <property type="entry name" value="Xanthine dehydrogenase/oxidase"/>
    <property type="match status" value="1"/>
</dbReference>
<dbReference type="FunFam" id="3.30.465.10:FF:000004">
    <property type="entry name" value="Xanthine dehydrogenase/oxidase"/>
    <property type="match status" value="1"/>
</dbReference>
<dbReference type="Gene3D" id="3.10.20.30">
    <property type="match status" value="1"/>
</dbReference>
<dbReference type="Gene3D" id="3.30.465.10">
    <property type="match status" value="1"/>
</dbReference>
<dbReference type="Gene3D" id="1.10.150.120">
    <property type="entry name" value="[2Fe-2S]-binding domain"/>
    <property type="match status" value="1"/>
</dbReference>
<dbReference type="Gene3D" id="3.90.1170.50">
    <property type="entry name" value="Aldehyde oxidase/xanthine dehydrogenase, a/b hammerhead"/>
    <property type="match status" value="1"/>
</dbReference>
<dbReference type="Gene3D" id="3.30.365.10">
    <property type="entry name" value="Aldehyde oxidase/xanthine dehydrogenase, molybdopterin binding domain"/>
    <property type="match status" value="4"/>
</dbReference>
<dbReference type="Gene3D" id="3.30.390.50">
    <property type="entry name" value="CO dehydrogenase flavoprotein, C-terminal domain"/>
    <property type="match status" value="1"/>
</dbReference>
<dbReference type="Gene3D" id="3.30.43.10">
    <property type="entry name" value="Uridine Diphospho-n-acetylenolpyruvylglucosamine Reductase, domain 2"/>
    <property type="match status" value="1"/>
</dbReference>
<dbReference type="InterPro" id="IPR002888">
    <property type="entry name" value="2Fe-2S-bd"/>
</dbReference>
<dbReference type="InterPro" id="IPR036884">
    <property type="entry name" value="2Fe-2S-bd_dom_sf"/>
</dbReference>
<dbReference type="InterPro" id="IPR036010">
    <property type="entry name" value="2Fe-2S_ferredoxin-like_sf"/>
</dbReference>
<dbReference type="InterPro" id="IPR001041">
    <property type="entry name" value="2Fe-2S_ferredoxin-type"/>
</dbReference>
<dbReference type="InterPro" id="IPR006058">
    <property type="entry name" value="2Fe2S_fd_BS"/>
</dbReference>
<dbReference type="InterPro" id="IPR000674">
    <property type="entry name" value="Ald_Oxase/Xan_DH_a/b"/>
</dbReference>
<dbReference type="InterPro" id="IPR036856">
    <property type="entry name" value="Ald_Oxase/Xan_DH_a/b_sf"/>
</dbReference>
<dbReference type="InterPro" id="IPR016208">
    <property type="entry name" value="Ald_Oxase/xanthine_DH-like"/>
</dbReference>
<dbReference type="InterPro" id="IPR014313">
    <property type="entry name" value="Aldehyde_oxidase"/>
</dbReference>
<dbReference type="InterPro" id="IPR008274">
    <property type="entry name" value="AldOxase/xan_DH_MoCoBD1"/>
</dbReference>
<dbReference type="InterPro" id="IPR046867">
    <property type="entry name" value="AldOxase/xan_DH_MoCoBD2"/>
</dbReference>
<dbReference type="InterPro" id="IPR037165">
    <property type="entry name" value="AldOxase/xan_DH_Mopterin-bd_sf"/>
</dbReference>
<dbReference type="InterPro" id="IPR012675">
    <property type="entry name" value="Beta-grasp_dom_sf"/>
</dbReference>
<dbReference type="InterPro" id="IPR005107">
    <property type="entry name" value="CO_DH_flav_C"/>
</dbReference>
<dbReference type="InterPro" id="IPR036683">
    <property type="entry name" value="CO_DH_flav_C_dom_sf"/>
</dbReference>
<dbReference type="InterPro" id="IPR016166">
    <property type="entry name" value="FAD-bd_PCMH"/>
</dbReference>
<dbReference type="InterPro" id="IPR036318">
    <property type="entry name" value="FAD-bd_PCMH-like_sf"/>
</dbReference>
<dbReference type="InterPro" id="IPR016167">
    <property type="entry name" value="FAD-bd_PCMH_sub1"/>
</dbReference>
<dbReference type="InterPro" id="IPR016169">
    <property type="entry name" value="FAD-bd_PCMH_sub2"/>
</dbReference>
<dbReference type="InterPro" id="IPR002346">
    <property type="entry name" value="Mopterin_DH_FAD-bd"/>
</dbReference>
<dbReference type="InterPro" id="IPR022407">
    <property type="entry name" value="OxRdtase_Mopterin_BS"/>
</dbReference>
<dbReference type="NCBIfam" id="TIGR02969">
    <property type="entry name" value="mam_aldehyde_ox"/>
    <property type="match status" value="1"/>
</dbReference>
<dbReference type="PANTHER" id="PTHR45444">
    <property type="entry name" value="XANTHINE DEHYDROGENASE"/>
    <property type="match status" value="1"/>
</dbReference>
<dbReference type="PANTHER" id="PTHR45444:SF3">
    <property type="entry name" value="XANTHINE DEHYDROGENASE"/>
    <property type="match status" value="1"/>
</dbReference>
<dbReference type="Pfam" id="PF01315">
    <property type="entry name" value="Ald_Xan_dh_C"/>
    <property type="match status" value="1"/>
</dbReference>
<dbReference type="Pfam" id="PF03450">
    <property type="entry name" value="CO_deh_flav_C"/>
    <property type="match status" value="1"/>
</dbReference>
<dbReference type="Pfam" id="PF00941">
    <property type="entry name" value="FAD_binding_5"/>
    <property type="match status" value="1"/>
</dbReference>
<dbReference type="Pfam" id="PF00111">
    <property type="entry name" value="Fer2"/>
    <property type="match status" value="1"/>
</dbReference>
<dbReference type="Pfam" id="PF01799">
    <property type="entry name" value="Fer2_2"/>
    <property type="match status" value="1"/>
</dbReference>
<dbReference type="Pfam" id="PF02738">
    <property type="entry name" value="MoCoBD_1"/>
    <property type="match status" value="1"/>
</dbReference>
<dbReference type="Pfam" id="PF20256">
    <property type="entry name" value="MoCoBD_2"/>
    <property type="match status" value="1"/>
</dbReference>
<dbReference type="PIRSF" id="PIRSF000127">
    <property type="entry name" value="Xanthine_DH"/>
    <property type="match status" value="1"/>
</dbReference>
<dbReference type="SMART" id="SM01008">
    <property type="entry name" value="Ald_Xan_dh_C"/>
    <property type="match status" value="1"/>
</dbReference>
<dbReference type="SMART" id="SM01092">
    <property type="entry name" value="CO_deh_flav_C"/>
    <property type="match status" value="1"/>
</dbReference>
<dbReference type="SUPFAM" id="SSF54292">
    <property type="entry name" value="2Fe-2S ferredoxin-like"/>
    <property type="match status" value="1"/>
</dbReference>
<dbReference type="SUPFAM" id="SSF55447">
    <property type="entry name" value="CO dehydrogenase flavoprotein C-terminal domain-like"/>
    <property type="match status" value="1"/>
</dbReference>
<dbReference type="SUPFAM" id="SSF47741">
    <property type="entry name" value="CO dehydrogenase ISP C-domain like"/>
    <property type="match status" value="1"/>
</dbReference>
<dbReference type="SUPFAM" id="SSF54665">
    <property type="entry name" value="CO dehydrogenase molybdoprotein N-domain-like"/>
    <property type="match status" value="1"/>
</dbReference>
<dbReference type="SUPFAM" id="SSF56176">
    <property type="entry name" value="FAD-binding/transporter-associated domain-like"/>
    <property type="match status" value="1"/>
</dbReference>
<dbReference type="SUPFAM" id="SSF56003">
    <property type="entry name" value="Molybdenum cofactor-binding domain"/>
    <property type="match status" value="1"/>
</dbReference>
<dbReference type="PROSITE" id="PS00197">
    <property type="entry name" value="2FE2S_FER_1"/>
    <property type="match status" value="1"/>
</dbReference>
<dbReference type="PROSITE" id="PS51085">
    <property type="entry name" value="2FE2S_FER_2"/>
    <property type="match status" value="1"/>
</dbReference>
<dbReference type="PROSITE" id="PS51387">
    <property type="entry name" value="FAD_PCMH"/>
    <property type="match status" value="1"/>
</dbReference>
<dbReference type="PROSITE" id="PS00559">
    <property type="entry name" value="MOLYBDOPTERIN_EUK"/>
    <property type="match status" value="1"/>
</dbReference>
<protein>
    <recommendedName>
        <fullName evidence="2">Aldehyde oxidase 1</fullName>
        <ecNumber evidence="1">1.2.3.1</ecNumber>
    </recommendedName>
    <alternativeName>
        <fullName>Azaheterocycle hydroxylase 1</fullName>
        <ecNumber evidence="5 6">1.17.3.-</ecNumber>
    </alternativeName>
</protein>
<keyword id="KW-0001">2Fe-2S</keyword>
<keyword id="KW-0963">Cytoplasm</keyword>
<keyword id="KW-0274">FAD</keyword>
<keyword id="KW-0285">Flavoprotein</keyword>
<keyword id="KW-0408">Iron</keyword>
<keyword id="KW-0411">Iron-sulfur</keyword>
<keyword id="KW-0443">Lipid metabolism</keyword>
<keyword id="KW-0479">Metal-binding</keyword>
<keyword id="KW-0500">Molybdenum</keyword>
<keyword id="KW-0560">Oxidoreductase</keyword>
<keyword id="KW-1185">Reference proteome</keyword>
<sequence length="1332" mass="145275">MEPSTLYFYVNGRRVTEKNVDPETMLLPYLGRNLRLTGTKYGCGGGGCGACTVMVSRYDRGTGQIRHYPACACLTPLCSLHGAAVTTVEGVGSTRTRLHPVQERIAKSHGTQCGFCTPGMVMSLYALLRSHPQPSEEQLLEALAGNLCRCTGYRPILDAGKTFCKTSGCCQSKENGVCCLDQGVNGVQEAEGEQTSQELCSEEEFVPLDPTQELIFPPELMILAQKQPQKSRVFTGDRVTWISPVTLKDLLEAKAKNPRAPVVMGNTSVGPEMKFKGVFHPVIISPDGIEELSVIKQGNEGLTLGAGLSLAQVQDVLADVVQQLPEEKTQTLCALLKQLRTLAGSQIRNMASLGGHIMSRHLDSDLNPVLAAASCTLHVPSQEGDRQIPLDEHFLSRSPSADLRPQEVLLSVTIPYSRKWEFVSAFRQAQRKRSARAIVNVGMRVFFGAGDGVISELCILYGGVGPAIVCATDACRKLVGRHWTEEMLDEACRLVLGEVAIPGAAPGGRVEFRRTLLVSFLFRFYLQVSQSLSRMDPGRYPSLVGKYESALEDLCLGHHQRTFELQSADAKQLPQDPIGRPIMHLSGIKHTTGEAIYCDDMPLVDRELSLAFVTSSRAHAAILSMDLSEALSLPGVVDIVTAEHLGDANSFAKETLLATDKVLCVGHLVCAVIADSEVQAKRAAEKVKIVYQDLEPLILTIEEAIQHDSFFETERKLESGDVAEAFRTAEQVLEGSIHMGGQEHFYMETQSMLAVPKGEDQEIDLYVSTQFPTYIQEIVASTLKLPVNKVMCHVRRVGGAFGGKVGKTAILAAITAFAALKHCRAVRCILERGEDMLITGGRHPYLGKYKVGFRNNGQVVALDMEHYSNAGSTLDESLMVVEMGLLKMENAYKFPNLRCRGHACKTNLPSNTALRGFGFPQSGLITEACIVEVAARCGLSPEEVREVNMYRGTEQTHYGQEIHTQRLAQCWSECKAKATFSLRRAAVDRFNAGSPWKKRGLAMVPLKFPVGLGSVAMGQAAALVHVYLDGSVLLTHGGIEMGQGVHTKMIQVVSRELKMPMANVHLRGTSTETVPNANVSGGSVVADLNGLAVKDACQTLLKRLEPIISKNPKGTWKEWAQAAFDQSISLSAIGYFRGYDADMDWEKGKGHPFEYFVYGAACSEVEIDCLTGNHKNIRTDIVMDVGRSINPALDLGQVEGAFIQGMGLYTSEELKYGPQGALYTRGPDQYKIPAVCDVPAELHVFFLPPSKNSNTLYSSKGLGESGVFLGCSVLFAIWDAVSAARRERGLPGTLALSCPLTPEKIRMACEDRFTKMIPRDTPGSYVPWDVVV</sequence>
<gene>
    <name evidence="2" type="primary">AOX1</name>
    <name type="synonym">AO</name>
</gene>
<organism>
    <name type="scientific">Cavia porcellus</name>
    <name type="common">Guinea pig</name>
    <dbReference type="NCBI Taxonomy" id="10141"/>
    <lineage>
        <taxon>Eukaryota</taxon>
        <taxon>Metazoa</taxon>
        <taxon>Chordata</taxon>
        <taxon>Craniata</taxon>
        <taxon>Vertebrata</taxon>
        <taxon>Euteleostomi</taxon>
        <taxon>Mammalia</taxon>
        <taxon>Eutheria</taxon>
        <taxon>Euarchontoglires</taxon>
        <taxon>Glires</taxon>
        <taxon>Rodentia</taxon>
        <taxon>Hystricomorpha</taxon>
        <taxon>Caviidae</taxon>
        <taxon>Cavia</taxon>
    </lineage>
</organism>
<name>AOXA_CAVPO</name>
<accession>H9TB17</accession>
<accession>H0WDM9</accession>
<comment type="function">
    <text evidence="5 6">Oxidase with broad substrate specificity, oxidizing aromatic azaheterocycles, such as N1-methylnicotinamide, N-methylphthalazinium and phthalazine, as well as aldehydes, such as benzaldehyde, retinal, pyridoxal, and vanillin. Plays a key role in the metabolism of xenobiotics and drugs containing aromatic azaheterocyclic substituents. Participates in the bioactivation of prodrugs such as famciclovir, catalyzing the oxidation step from 6-deoxypenciclovir to penciclovir, which is a potent antiviral agent. Is probably involved in the regulation of reactive oxygen species homeostasis. May be a prominent source of superoxide generation via the one-electron reduction of molecular oxygen. May also catalyze nitric oxide (NO) production via the reduction of nitrite to NO with NADH or aldehyde as electron donor. May play a role in adipogenesis.</text>
</comment>
<comment type="catalytic activity">
    <reaction evidence="1">
        <text>an aldehyde + O2 + H2O = a carboxylate + H2O2 + H(+)</text>
        <dbReference type="Rhea" id="RHEA:16829"/>
        <dbReference type="ChEBI" id="CHEBI:15377"/>
        <dbReference type="ChEBI" id="CHEBI:15378"/>
        <dbReference type="ChEBI" id="CHEBI:15379"/>
        <dbReference type="ChEBI" id="CHEBI:16240"/>
        <dbReference type="ChEBI" id="CHEBI:17478"/>
        <dbReference type="ChEBI" id="CHEBI:29067"/>
        <dbReference type="EC" id="1.2.3.1"/>
    </reaction>
</comment>
<comment type="catalytic activity">
    <reaction evidence="1">
        <text>retinal + O2 + H2O = retinoate + H2O2 + H(+)</text>
        <dbReference type="Rhea" id="RHEA:56736"/>
        <dbReference type="ChEBI" id="CHEBI:15035"/>
        <dbReference type="ChEBI" id="CHEBI:15036"/>
        <dbReference type="ChEBI" id="CHEBI:15377"/>
        <dbReference type="ChEBI" id="CHEBI:15378"/>
        <dbReference type="ChEBI" id="CHEBI:15379"/>
        <dbReference type="ChEBI" id="CHEBI:16240"/>
    </reaction>
</comment>
<comment type="cofactor">
    <cofactor evidence="1">
        <name>[2Fe-2S] cluster</name>
        <dbReference type="ChEBI" id="CHEBI:190135"/>
    </cofactor>
    <text evidence="1">Binds 2 [2Fe-2S] clusters per subunit.</text>
</comment>
<comment type="cofactor">
    <cofactor evidence="1">
        <name>FAD</name>
        <dbReference type="ChEBI" id="CHEBI:57692"/>
    </cofactor>
    <text evidence="1">Binds 1 FAD per subunit.</text>
</comment>
<comment type="cofactor">
    <cofactor evidence="1">
        <name>Mo-molybdopterin</name>
        <dbReference type="ChEBI" id="CHEBI:71302"/>
    </cofactor>
    <text evidence="1">Binds 1 Mo-molybdopterin (Mo-MPT) cofactor per subunit.</text>
</comment>
<comment type="activity regulation">
    <text evidence="6">Inhibited by menadione and isovanillin. Not inhibited by allopurinol, a xanthine dehydrogenase potent inhibitor.</text>
</comment>
<comment type="biophysicochemical properties">
    <kinetics>
        <KM evidence="6">0.41 mM for 6-deoxypenciclovir (at 37 degrees Celsius and pH 7)</KM>
        <KM evidence="6">0.17 mM for famciclovir (at 37 degrees Celsius and pH 7)</KM>
        <Vmax evidence="6">209.0 nmol/min/mg enzyme with 6-deoxypenciclovir as substrate</Vmax>
        <Vmax evidence="6">439.0 nmol/min/mg enzyme with famciclovir as substrate</Vmax>
    </kinetics>
</comment>
<comment type="subunit">
    <text evidence="2">Homodimer.</text>
</comment>
<comment type="subcellular location">
    <subcellularLocation>
        <location evidence="6">Cytoplasm</location>
    </subcellularLocation>
</comment>
<comment type="tissue specificity">
    <text evidence="6">Expressed in liver.</text>
</comment>
<comment type="miscellaneous">
    <text evidence="8">AOX genes evolved from a xanthine oxidoreductase ancestral precursor via a series of gene duplication and suppression/deletion events. Different animal species contain a different complement of AOX genes encoding an equivalent number of AOX isoenzymes. In mammals, the two extremes are represented by certain rodents such as mice and rats, which are endowed with 4 AOX genes, and by humans, whose genome is characterized by a single active gene (PubMed:23263164).</text>
</comment>
<comment type="similarity">
    <text evidence="7">Belongs to the xanthine dehydrogenase family.</text>
</comment>